<dbReference type="EMBL" id="AF519896">
    <property type="protein sequence ID" value="AAB25380.1"/>
    <property type="molecule type" value="Genomic_DNA"/>
</dbReference>
<dbReference type="EMBL" id="M88485">
    <property type="protein sequence ID" value="AAB41801.1"/>
    <property type="molecule type" value="Genomic_DNA"/>
</dbReference>
<dbReference type="PIR" id="A48964">
    <property type="entry name" value="A48964"/>
</dbReference>
<dbReference type="SMR" id="P31850"/>
<dbReference type="CDD" id="cd02440">
    <property type="entry name" value="AdoMet_MTases"/>
    <property type="match status" value="1"/>
</dbReference>
<dbReference type="Gene3D" id="3.40.50.150">
    <property type="entry name" value="Vaccinia Virus protein VP39"/>
    <property type="match status" value="1"/>
</dbReference>
<dbReference type="InterPro" id="IPR029063">
    <property type="entry name" value="SAM-dependent_MTases_sf"/>
</dbReference>
<dbReference type="SUPFAM" id="SSF53335">
    <property type="entry name" value="S-adenosyl-L-methionine-dependent methyltransferases"/>
    <property type="match status" value="1"/>
</dbReference>
<name>TBLA_PSEAJ</name>
<comment type="function">
    <text>May play a role in tabtoxin biosynthesis.</text>
</comment>
<reference key="1">
    <citation type="journal article" date="1993" name="Appl. Environ. Microbiol.">
        <title>DNA sequence and transcriptional analysis of the tblA gene required for tabtoxin biosynthesis by Pseudomonas syringae.</title>
        <authorList>
            <person name="Barta T.M."/>
            <person name="Kinscherf T.G."/>
            <person name="Uchytil T.F."/>
            <person name="Willis D.K."/>
        </authorList>
    </citation>
    <scope>NUCLEOTIDE SEQUENCE [GENOMIC DNA]</scope>
</reference>
<reference key="2">
    <citation type="journal article" date="1992" name="Mol. Plant Microbe Interact.">
        <title>Identification of a lysA-like gene required for tabtoxin biosynthesis and pathogenicity in Pseudomonas syringae pv. tabaci strain PTBR2.024.</title>
        <authorList>
            <person name="Engst K."/>
            <person name="Shaw P.D."/>
        </authorList>
    </citation>
    <scope>NUCLEOTIDE SEQUENCE [GENOMIC DNA] OF 22-252</scope>
    <source>
        <strain>PTBR2.024</strain>
    </source>
</reference>
<proteinExistence type="predicted"/>
<evidence type="ECO:0000256" key="1">
    <source>
        <dbReference type="SAM" id="MobiDB-lite"/>
    </source>
</evidence>
<organism>
    <name type="scientific">Pseudomonas amygdali pv. tabaci</name>
    <name type="common">Pseudomonas syringae pv. tabaci</name>
    <dbReference type="NCBI Taxonomy" id="322"/>
    <lineage>
        <taxon>Bacteria</taxon>
        <taxon>Pseudomonadati</taxon>
        <taxon>Pseudomonadota</taxon>
        <taxon>Gammaproteobacteria</taxon>
        <taxon>Pseudomonadales</taxon>
        <taxon>Pseudomonadaceae</taxon>
        <taxon>Pseudomonas</taxon>
        <taxon>Pseudomonas amygdali</taxon>
    </lineage>
</organism>
<gene>
    <name type="primary">tblA</name>
</gene>
<accession>P31850</accession>
<sequence length="252" mass="28254">MYQRTATQLARKPASKQGETEMNNSIQDLKQVEDYYGTTRRFGDSDATIYEIWEQGGAFNDSITPSTYSQEYRSHLGLKLKSLTEEGAIIFSIGCGNGFVEGDLVQAKRRVLAIDFNDEAVALSRKKGVDAYTADFFELEPGALAGVKSIYADGLLGHLFHPELELKPTFEKLKELNLESGTTLVFSNDSPRDPEALFAAHDKVDGFWFISRDYLRDALTEAGFKIEESYYFPYTRPISGLRNRTLCVALVP</sequence>
<feature type="chain" id="PRO_0000072443" description="Tabtoxin biosynthesis enzyme">
    <location>
        <begin position="1"/>
        <end position="252"/>
    </location>
</feature>
<feature type="region of interest" description="Disordered" evidence="1">
    <location>
        <begin position="1"/>
        <end position="23"/>
    </location>
</feature>
<protein>
    <recommendedName>
        <fullName>Tabtoxin biosynthesis enzyme</fullName>
    </recommendedName>
</protein>